<sequence>MIKLKKGDPVIVLTGKDKGKVSKIKQIIRKDGKVKVVVEGVNVVKKHLRPIQGVREGGIVEIEKPIDISNVAYYDEKSKRPVKVGIKYVVEGNKISKVRINKKSGEIIDKVWEKIKKEV</sequence>
<name>RL24_SULSY</name>
<comment type="function">
    <text evidence="1">One of two assembly initiator proteins, it binds directly to the 5'-end of the 23S rRNA, where it nucleates assembly of the 50S subunit.</text>
</comment>
<comment type="function">
    <text evidence="1">One of the proteins that surrounds the polypeptide exit tunnel on the outside of the subunit.</text>
</comment>
<comment type="subunit">
    <text evidence="1">Part of the 50S ribosomal subunit.</text>
</comment>
<comment type="similarity">
    <text evidence="1">Belongs to the universal ribosomal protein uL24 family.</text>
</comment>
<accession>B2V7K2</accession>
<gene>
    <name evidence="1" type="primary">rplX</name>
    <name type="ordered locus">SYO3AOP1_0280</name>
</gene>
<proteinExistence type="inferred from homology"/>
<reference key="1">
    <citation type="journal article" date="2009" name="J. Bacteriol.">
        <title>Complete and draft genome sequences of six members of the Aquificales.</title>
        <authorList>
            <person name="Reysenbach A.-L."/>
            <person name="Hamamura N."/>
            <person name="Podar M."/>
            <person name="Griffiths E."/>
            <person name="Ferreira S."/>
            <person name="Hochstein R."/>
            <person name="Heidelberg J."/>
            <person name="Johnson J."/>
            <person name="Mead D."/>
            <person name="Pohorille A."/>
            <person name="Sarmiento M."/>
            <person name="Schweighofer K."/>
            <person name="Seshadri R."/>
            <person name="Voytek M.A."/>
        </authorList>
    </citation>
    <scope>NUCLEOTIDE SEQUENCE [LARGE SCALE GENOMIC DNA]</scope>
    <source>
        <strain>YO3AOP1</strain>
    </source>
</reference>
<feature type="chain" id="PRO_1000214557" description="Large ribosomal subunit protein uL24">
    <location>
        <begin position="1"/>
        <end position="119"/>
    </location>
</feature>
<keyword id="KW-0687">Ribonucleoprotein</keyword>
<keyword id="KW-0689">Ribosomal protein</keyword>
<keyword id="KW-0694">RNA-binding</keyword>
<keyword id="KW-0699">rRNA-binding</keyword>
<organism>
    <name type="scientific">Sulfurihydrogenibium sp. (strain YO3AOP1)</name>
    <dbReference type="NCBI Taxonomy" id="436114"/>
    <lineage>
        <taxon>Bacteria</taxon>
        <taxon>Pseudomonadati</taxon>
        <taxon>Aquificota</taxon>
        <taxon>Aquificia</taxon>
        <taxon>Aquificales</taxon>
        <taxon>Hydrogenothermaceae</taxon>
        <taxon>Sulfurihydrogenibium</taxon>
    </lineage>
</organism>
<evidence type="ECO:0000255" key="1">
    <source>
        <dbReference type="HAMAP-Rule" id="MF_01326"/>
    </source>
</evidence>
<evidence type="ECO:0000305" key="2"/>
<dbReference type="EMBL" id="CP001080">
    <property type="protein sequence ID" value="ACD65925.1"/>
    <property type="molecule type" value="Genomic_DNA"/>
</dbReference>
<dbReference type="RefSeq" id="WP_012459014.1">
    <property type="nucleotide sequence ID" value="NC_010730.1"/>
</dbReference>
<dbReference type="SMR" id="B2V7K2"/>
<dbReference type="STRING" id="436114.SYO3AOP1_0280"/>
<dbReference type="KEGG" id="sul:SYO3AOP1_0280"/>
<dbReference type="eggNOG" id="COG0198">
    <property type="taxonomic scope" value="Bacteria"/>
</dbReference>
<dbReference type="HOGENOM" id="CLU_093315_2_0_0"/>
<dbReference type="GO" id="GO:1990904">
    <property type="term" value="C:ribonucleoprotein complex"/>
    <property type="evidence" value="ECO:0007669"/>
    <property type="project" value="UniProtKB-KW"/>
</dbReference>
<dbReference type="GO" id="GO:0005840">
    <property type="term" value="C:ribosome"/>
    <property type="evidence" value="ECO:0007669"/>
    <property type="project" value="UniProtKB-KW"/>
</dbReference>
<dbReference type="GO" id="GO:0019843">
    <property type="term" value="F:rRNA binding"/>
    <property type="evidence" value="ECO:0007669"/>
    <property type="project" value="UniProtKB-UniRule"/>
</dbReference>
<dbReference type="GO" id="GO:0003735">
    <property type="term" value="F:structural constituent of ribosome"/>
    <property type="evidence" value="ECO:0007669"/>
    <property type="project" value="InterPro"/>
</dbReference>
<dbReference type="GO" id="GO:0006412">
    <property type="term" value="P:translation"/>
    <property type="evidence" value="ECO:0007669"/>
    <property type="project" value="UniProtKB-UniRule"/>
</dbReference>
<dbReference type="CDD" id="cd06089">
    <property type="entry name" value="KOW_RPL26"/>
    <property type="match status" value="1"/>
</dbReference>
<dbReference type="Gene3D" id="2.30.30.30">
    <property type="match status" value="1"/>
</dbReference>
<dbReference type="HAMAP" id="MF_01326_B">
    <property type="entry name" value="Ribosomal_uL24_B"/>
    <property type="match status" value="1"/>
</dbReference>
<dbReference type="InterPro" id="IPR005824">
    <property type="entry name" value="KOW"/>
</dbReference>
<dbReference type="InterPro" id="IPR014722">
    <property type="entry name" value="Rib_uL2_dom2"/>
</dbReference>
<dbReference type="InterPro" id="IPR003256">
    <property type="entry name" value="Ribosomal_uL24"/>
</dbReference>
<dbReference type="InterPro" id="IPR041988">
    <property type="entry name" value="Ribosomal_uL24_KOW"/>
</dbReference>
<dbReference type="InterPro" id="IPR008991">
    <property type="entry name" value="Translation_prot_SH3-like_sf"/>
</dbReference>
<dbReference type="NCBIfam" id="TIGR01079">
    <property type="entry name" value="rplX_bact"/>
    <property type="match status" value="1"/>
</dbReference>
<dbReference type="PANTHER" id="PTHR12903">
    <property type="entry name" value="MITOCHONDRIAL RIBOSOMAL PROTEIN L24"/>
    <property type="match status" value="1"/>
</dbReference>
<dbReference type="Pfam" id="PF17136">
    <property type="entry name" value="ribosomal_L24"/>
    <property type="match status" value="1"/>
</dbReference>
<dbReference type="SMART" id="SM00739">
    <property type="entry name" value="KOW"/>
    <property type="match status" value="1"/>
</dbReference>
<dbReference type="SUPFAM" id="SSF50104">
    <property type="entry name" value="Translation proteins SH3-like domain"/>
    <property type="match status" value="1"/>
</dbReference>
<protein>
    <recommendedName>
        <fullName evidence="1">Large ribosomal subunit protein uL24</fullName>
    </recommendedName>
    <alternativeName>
        <fullName evidence="2">50S ribosomal protein L24</fullName>
    </alternativeName>
</protein>